<keyword id="KW-0031">Aminopeptidase</keyword>
<keyword id="KW-0378">Hydrolase</keyword>
<keyword id="KW-0479">Metal-binding</keyword>
<keyword id="KW-0645">Protease</keyword>
<proteinExistence type="evidence at protein level"/>
<organism>
    <name type="scientific">Staphylococcus aureus (strain N315)</name>
    <dbReference type="NCBI Taxonomy" id="158879"/>
    <lineage>
        <taxon>Bacteria</taxon>
        <taxon>Bacillati</taxon>
        <taxon>Bacillota</taxon>
        <taxon>Bacilli</taxon>
        <taxon>Bacillales</taxon>
        <taxon>Staphylococcaceae</taxon>
        <taxon>Staphylococcus</taxon>
    </lineage>
</organism>
<reference key="1">
    <citation type="journal article" date="2001" name="Lancet">
        <title>Whole genome sequencing of meticillin-resistant Staphylococcus aureus.</title>
        <authorList>
            <person name="Kuroda M."/>
            <person name="Ohta T."/>
            <person name="Uchiyama I."/>
            <person name="Baba T."/>
            <person name="Yuzawa H."/>
            <person name="Kobayashi I."/>
            <person name="Cui L."/>
            <person name="Oguchi A."/>
            <person name="Aoki K."/>
            <person name="Nagai Y."/>
            <person name="Lian J.-Q."/>
            <person name="Ito T."/>
            <person name="Kanamori M."/>
            <person name="Matsumaru H."/>
            <person name="Maruyama A."/>
            <person name="Murakami H."/>
            <person name="Hosoyama A."/>
            <person name="Mizutani-Ui Y."/>
            <person name="Takahashi N.K."/>
            <person name="Sawano T."/>
            <person name="Inoue R."/>
            <person name="Kaito C."/>
            <person name="Sekimizu K."/>
            <person name="Hirakawa H."/>
            <person name="Kuhara S."/>
            <person name="Goto S."/>
            <person name="Yabuzaki J."/>
            <person name="Kanehisa M."/>
            <person name="Yamashita A."/>
            <person name="Oshima K."/>
            <person name="Furuya K."/>
            <person name="Yoshino C."/>
            <person name="Shiba T."/>
            <person name="Hattori M."/>
            <person name="Ogasawara N."/>
            <person name="Hayashi H."/>
            <person name="Hiramatsu K."/>
        </authorList>
    </citation>
    <scope>NUCLEOTIDE SEQUENCE [LARGE SCALE GENOMIC DNA]</scope>
    <source>
        <strain>N315</strain>
    </source>
</reference>
<reference key="2">
    <citation type="journal article" date="2005" name="J. Microbiol. Methods">
        <title>Correlation of proteomic and transcriptomic profiles of Staphylococcus aureus during the post-exponential phase of growth.</title>
        <authorList>
            <person name="Scherl A."/>
            <person name="Francois P."/>
            <person name="Bento M."/>
            <person name="Deshusses J.M."/>
            <person name="Charbonnier Y."/>
            <person name="Converset V."/>
            <person name="Huyghe A."/>
            <person name="Walter N."/>
            <person name="Hoogland C."/>
            <person name="Appel R.D."/>
            <person name="Sanchez J.-C."/>
            <person name="Zimmermann-Ivol C.G."/>
            <person name="Corthals G.L."/>
            <person name="Hochstrasser D.F."/>
            <person name="Schrenzel J."/>
        </authorList>
    </citation>
    <scope>IDENTIFICATION BY MASS SPECTROMETRY</scope>
    <source>
        <strain>N315</strain>
    </source>
</reference>
<reference key="3">
    <citation type="submission" date="2007-10" db="UniProtKB">
        <title>Shotgun proteomic analysis of total and membrane protein extracts of S. aureus strain N315.</title>
        <authorList>
            <person name="Vaezzadeh A.R."/>
            <person name="Deshusses J."/>
            <person name="Lescuyer P."/>
            <person name="Hochstrasser D.F."/>
        </authorList>
    </citation>
    <scope>IDENTIFICATION BY MASS SPECTROMETRY [LARGE SCALE ANALYSIS]</scope>
    <source>
        <strain>N315</strain>
    </source>
</reference>
<feature type="chain" id="PRO_0000148956" description="Methionine aminopeptidase">
    <location>
        <begin position="1"/>
        <end position="252"/>
    </location>
</feature>
<feature type="binding site" evidence="1">
    <location>
        <position position="76"/>
    </location>
    <ligand>
        <name>substrate</name>
    </ligand>
</feature>
<feature type="binding site" evidence="1">
    <location>
        <position position="93"/>
    </location>
    <ligand>
        <name>a divalent metal cation</name>
        <dbReference type="ChEBI" id="CHEBI:60240"/>
        <label>1</label>
    </ligand>
</feature>
<feature type="binding site" evidence="1">
    <location>
        <position position="104"/>
    </location>
    <ligand>
        <name>a divalent metal cation</name>
        <dbReference type="ChEBI" id="CHEBI:60240"/>
        <label>1</label>
    </ligand>
</feature>
<feature type="binding site" evidence="1">
    <location>
        <position position="104"/>
    </location>
    <ligand>
        <name>a divalent metal cation</name>
        <dbReference type="ChEBI" id="CHEBI:60240"/>
        <label>2</label>
        <note>catalytic</note>
    </ligand>
</feature>
<feature type="binding site" evidence="1">
    <location>
        <position position="168"/>
    </location>
    <ligand>
        <name>a divalent metal cation</name>
        <dbReference type="ChEBI" id="CHEBI:60240"/>
        <label>2</label>
        <note>catalytic</note>
    </ligand>
</feature>
<feature type="binding site" evidence="1">
    <location>
        <position position="175"/>
    </location>
    <ligand>
        <name>substrate</name>
    </ligand>
</feature>
<feature type="binding site" evidence="1">
    <location>
        <position position="202"/>
    </location>
    <ligand>
        <name>a divalent metal cation</name>
        <dbReference type="ChEBI" id="CHEBI:60240"/>
        <label>2</label>
        <note>catalytic</note>
    </ligand>
</feature>
<feature type="binding site" evidence="1">
    <location>
        <position position="233"/>
    </location>
    <ligand>
        <name>a divalent metal cation</name>
        <dbReference type="ChEBI" id="CHEBI:60240"/>
        <label>1</label>
    </ligand>
</feature>
<feature type="binding site" evidence="1">
    <location>
        <position position="233"/>
    </location>
    <ligand>
        <name>a divalent metal cation</name>
        <dbReference type="ChEBI" id="CHEBI:60240"/>
        <label>2</label>
        <note>catalytic</note>
    </ligand>
</feature>
<dbReference type="EC" id="3.4.11.18" evidence="1"/>
<dbReference type="EMBL" id="BA000018">
    <property type="protein sequence ID" value="BAB42974.1"/>
    <property type="molecule type" value="Genomic_DNA"/>
</dbReference>
<dbReference type="PIR" id="G89976">
    <property type="entry name" value="G89976"/>
</dbReference>
<dbReference type="RefSeq" id="WP_000636142.1">
    <property type="nucleotide sequence ID" value="NC_002745.2"/>
</dbReference>
<dbReference type="SMR" id="P99121"/>
<dbReference type="MEROPS" id="M24.036"/>
<dbReference type="EnsemblBacteria" id="BAB42974">
    <property type="protein sequence ID" value="BAB42974"/>
    <property type="gene ID" value="BAB42974"/>
</dbReference>
<dbReference type="KEGG" id="sau:SA1704"/>
<dbReference type="HOGENOM" id="CLU_015857_0_2_9"/>
<dbReference type="GO" id="GO:0004239">
    <property type="term" value="F:initiator methionyl aminopeptidase activity"/>
    <property type="evidence" value="ECO:0007669"/>
    <property type="project" value="UniProtKB-UniRule"/>
</dbReference>
<dbReference type="GO" id="GO:0046872">
    <property type="term" value="F:metal ion binding"/>
    <property type="evidence" value="ECO:0007669"/>
    <property type="project" value="UniProtKB-UniRule"/>
</dbReference>
<dbReference type="GO" id="GO:0070006">
    <property type="term" value="F:metalloaminopeptidase activity"/>
    <property type="evidence" value="ECO:0007669"/>
    <property type="project" value="UniProtKB-UniRule"/>
</dbReference>
<dbReference type="GO" id="GO:0006508">
    <property type="term" value="P:proteolysis"/>
    <property type="evidence" value="ECO:0007669"/>
    <property type="project" value="UniProtKB-KW"/>
</dbReference>
<dbReference type="CDD" id="cd01086">
    <property type="entry name" value="MetAP1"/>
    <property type="match status" value="1"/>
</dbReference>
<dbReference type="Gene3D" id="3.90.230.10">
    <property type="entry name" value="Creatinase/methionine aminopeptidase superfamily"/>
    <property type="match status" value="1"/>
</dbReference>
<dbReference type="HAMAP" id="MF_01974">
    <property type="entry name" value="MetAP_1"/>
    <property type="match status" value="1"/>
</dbReference>
<dbReference type="InterPro" id="IPR036005">
    <property type="entry name" value="Creatinase/aminopeptidase-like"/>
</dbReference>
<dbReference type="InterPro" id="IPR000994">
    <property type="entry name" value="Pept_M24"/>
</dbReference>
<dbReference type="InterPro" id="IPR001714">
    <property type="entry name" value="Pept_M24_MAP"/>
</dbReference>
<dbReference type="InterPro" id="IPR002467">
    <property type="entry name" value="Pept_M24A_MAP1"/>
</dbReference>
<dbReference type="NCBIfam" id="TIGR00500">
    <property type="entry name" value="met_pdase_I"/>
    <property type="match status" value="1"/>
</dbReference>
<dbReference type="PANTHER" id="PTHR43330">
    <property type="entry name" value="METHIONINE AMINOPEPTIDASE"/>
    <property type="match status" value="1"/>
</dbReference>
<dbReference type="PANTHER" id="PTHR43330:SF13">
    <property type="entry name" value="METHIONINE AMINOPEPTIDASE 2"/>
    <property type="match status" value="1"/>
</dbReference>
<dbReference type="Pfam" id="PF00557">
    <property type="entry name" value="Peptidase_M24"/>
    <property type="match status" value="1"/>
</dbReference>
<dbReference type="PRINTS" id="PR00599">
    <property type="entry name" value="MAPEPTIDASE"/>
</dbReference>
<dbReference type="SUPFAM" id="SSF55920">
    <property type="entry name" value="Creatinase/aminopeptidase"/>
    <property type="match status" value="1"/>
</dbReference>
<gene>
    <name evidence="1" type="primary">map</name>
    <name type="ordered locus">SA1704</name>
</gene>
<name>MAP1_STAAN</name>
<accession>P99121</accession>
<accession>Q9KWL1</accession>
<comment type="function">
    <text evidence="1">Removes the N-terminal methionine from nascent proteins. The N-terminal methionine is often cleaved when the second residue in the primary sequence is small and uncharged (Met-Ala-, Cys, Gly, Pro, Ser, Thr, or Val). Requires deformylation of the N(alpha)-formylated initiator methionine before it can be hydrolyzed.</text>
</comment>
<comment type="catalytic activity">
    <reaction evidence="1">
        <text>Release of N-terminal amino acids, preferentially methionine, from peptides and arylamides.</text>
        <dbReference type="EC" id="3.4.11.18"/>
    </reaction>
</comment>
<comment type="cofactor">
    <cofactor evidence="1">
        <name>Co(2+)</name>
        <dbReference type="ChEBI" id="CHEBI:48828"/>
    </cofactor>
    <cofactor evidence="1">
        <name>Zn(2+)</name>
        <dbReference type="ChEBI" id="CHEBI:29105"/>
    </cofactor>
    <cofactor evidence="1">
        <name>Mn(2+)</name>
        <dbReference type="ChEBI" id="CHEBI:29035"/>
    </cofactor>
    <cofactor evidence="1">
        <name>Fe(2+)</name>
        <dbReference type="ChEBI" id="CHEBI:29033"/>
    </cofactor>
    <text evidence="1">Binds 2 divalent metal cations per subunit. Has a high-affinity and a low affinity metal-binding site. The true nature of the physiological cofactor is under debate. The enzyme is active with cobalt, zinc, manganese or divalent iron ions. Most likely, methionine aminopeptidases function as mononuclear Fe(2+)-metalloproteases under physiological conditions, and the catalytically relevant metal-binding site has been assigned to the histidine-containing high-affinity site.</text>
</comment>
<comment type="subunit">
    <text evidence="1">Monomer.</text>
</comment>
<comment type="similarity">
    <text evidence="1">Belongs to the peptidase M24A family. Methionine aminopeptidase type 1 subfamily.</text>
</comment>
<protein>
    <recommendedName>
        <fullName evidence="1">Methionine aminopeptidase</fullName>
        <shortName evidence="1">MAP</shortName>
        <shortName evidence="1">MetAP</shortName>
        <ecNumber evidence="1">3.4.11.18</ecNumber>
    </recommendedName>
    <alternativeName>
        <fullName evidence="1">Peptidase M</fullName>
    </alternativeName>
</protein>
<evidence type="ECO:0000255" key="1">
    <source>
        <dbReference type="HAMAP-Rule" id="MF_01974"/>
    </source>
</evidence>
<sequence>MIVKTEEELQALKEIGYICAKVRNTMQAATKPGITTKELDNIAKELFEEYGAISAPIHDENFPGQTCISVNEEVAHGIPSKRVIREGDLVNIDVSALKNGYYADTGISFVVGESDDPMKQKVCDVATMAFENAIAKVKPGTKLSNIGKAVHNTARQNDLKVIKNLTGHGVGLSLHEAPAHVLNYFDPKDKTLLTEGMVLAIEPFISSNASFVTEGKNEWAFETSDKSFVAQIEHTVIVTKDGPILTTKIEEE</sequence>